<protein>
    <recommendedName>
        <fullName evidence="1">Translational regulator CsrA</fullName>
    </recommendedName>
    <alternativeName>
        <fullName evidence="1">Carbon storage regulator</fullName>
    </alternativeName>
</protein>
<evidence type="ECO:0000255" key="1">
    <source>
        <dbReference type="HAMAP-Rule" id="MF_00167"/>
    </source>
</evidence>
<reference key="1">
    <citation type="journal article" date="2007" name="Genes Dev.">
        <title>New insights into Acinetobacter baumannii pathogenesis revealed by high-density pyrosequencing and transposon mutagenesis.</title>
        <authorList>
            <person name="Smith M.G."/>
            <person name="Gianoulis T.A."/>
            <person name="Pukatzki S."/>
            <person name="Mekalanos J.J."/>
            <person name="Ornston L.N."/>
            <person name="Gerstein M."/>
            <person name="Snyder M."/>
        </authorList>
    </citation>
    <scope>NUCLEOTIDE SEQUENCE [LARGE SCALE GENOMIC DNA]</scope>
    <source>
        <strain>ATCC 17978 / DSM 105126 / CIP 53.77 / LMG 1025 / NCDC KC755 / 5377</strain>
    </source>
</reference>
<comment type="function">
    <text evidence="1">A key translational regulator that binds mRNA to regulate translation initiation and/or mRNA stability. Mediates global changes in gene expression, shifting from rapid growth to stress survival by linking envelope stress, the stringent response and the catabolite repression systems. Usually binds in the 5'-UTR; binding at or near the Shine-Dalgarno sequence prevents ribosome-binding, repressing translation, binding elsewhere in the 5'-UTR can activate translation and/or stabilize the mRNA. Its function is antagonized by small RNA(s).</text>
</comment>
<comment type="subunit">
    <text evidence="1">Homodimer; the beta-strands of each monomer intercalate to form a hydrophobic core, while the alpha-helices form wings that extend away from the core.</text>
</comment>
<comment type="subcellular location">
    <subcellularLocation>
        <location evidence="1">Cytoplasm</location>
    </subcellularLocation>
</comment>
<comment type="similarity">
    <text evidence="1">Belongs to the CsrA/RsmA family.</text>
</comment>
<organism>
    <name type="scientific">Acinetobacter baumannii (strain ATCC 17978 / DSM 105126 / CIP 53.77 / LMG 1025 / NCDC KC755 / 5377)</name>
    <dbReference type="NCBI Taxonomy" id="400667"/>
    <lineage>
        <taxon>Bacteria</taxon>
        <taxon>Pseudomonadati</taxon>
        <taxon>Pseudomonadota</taxon>
        <taxon>Gammaproteobacteria</taxon>
        <taxon>Moraxellales</taxon>
        <taxon>Moraxellaceae</taxon>
        <taxon>Acinetobacter</taxon>
        <taxon>Acinetobacter calcoaceticus/baumannii complex</taxon>
    </lineage>
</organism>
<proteinExistence type="inferred from homology"/>
<accession>A3M3S7</accession>
<feature type="chain" id="PRO_1000097473" description="Translational regulator CsrA">
    <location>
        <begin position="1"/>
        <end position="84"/>
    </location>
</feature>
<dbReference type="EMBL" id="CP000521">
    <property type="protein sequence ID" value="ABO11571.2"/>
    <property type="molecule type" value="Genomic_DNA"/>
</dbReference>
<dbReference type="RefSeq" id="WP_000906487.1">
    <property type="nucleotide sequence ID" value="NZ_CP053098.1"/>
</dbReference>
<dbReference type="SMR" id="A3M3S7"/>
<dbReference type="GeneID" id="92893212"/>
<dbReference type="KEGG" id="acb:A1S_1141"/>
<dbReference type="HOGENOM" id="CLU_164837_2_1_6"/>
<dbReference type="PHI-base" id="PHI:11447"/>
<dbReference type="GO" id="GO:0005829">
    <property type="term" value="C:cytosol"/>
    <property type="evidence" value="ECO:0007669"/>
    <property type="project" value="TreeGrafter"/>
</dbReference>
<dbReference type="GO" id="GO:0048027">
    <property type="term" value="F:mRNA 5'-UTR binding"/>
    <property type="evidence" value="ECO:0007669"/>
    <property type="project" value="UniProtKB-UniRule"/>
</dbReference>
<dbReference type="GO" id="GO:0006402">
    <property type="term" value="P:mRNA catabolic process"/>
    <property type="evidence" value="ECO:0007669"/>
    <property type="project" value="InterPro"/>
</dbReference>
<dbReference type="GO" id="GO:0045947">
    <property type="term" value="P:negative regulation of translational initiation"/>
    <property type="evidence" value="ECO:0007669"/>
    <property type="project" value="UniProtKB-UniRule"/>
</dbReference>
<dbReference type="GO" id="GO:0045948">
    <property type="term" value="P:positive regulation of translational initiation"/>
    <property type="evidence" value="ECO:0007669"/>
    <property type="project" value="UniProtKB-UniRule"/>
</dbReference>
<dbReference type="GO" id="GO:0006109">
    <property type="term" value="P:regulation of carbohydrate metabolic process"/>
    <property type="evidence" value="ECO:0007669"/>
    <property type="project" value="UniProtKB-UniRule"/>
</dbReference>
<dbReference type="FunFam" id="2.60.40.4380:FF:000001">
    <property type="entry name" value="Translational regulator CsrA"/>
    <property type="match status" value="1"/>
</dbReference>
<dbReference type="Gene3D" id="2.60.40.4380">
    <property type="entry name" value="Translational regulator CsrA"/>
    <property type="match status" value="1"/>
</dbReference>
<dbReference type="HAMAP" id="MF_00167">
    <property type="entry name" value="CsrA"/>
    <property type="match status" value="1"/>
</dbReference>
<dbReference type="InterPro" id="IPR003751">
    <property type="entry name" value="CsrA"/>
</dbReference>
<dbReference type="InterPro" id="IPR036107">
    <property type="entry name" value="CsrA_sf"/>
</dbReference>
<dbReference type="NCBIfam" id="TIGR00202">
    <property type="entry name" value="csrA"/>
    <property type="match status" value="1"/>
</dbReference>
<dbReference type="NCBIfam" id="NF002469">
    <property type="entry name" value="PRK01712.1"/>
    <property type="match status" value="1"/>
</dbReference>
<dbReference type="PANTHER" id="PTHR34984">
    <property type="entry name" value="CARBON STORAGE REGULATOR"/>
    <property type="match status" value="1"/>
</dbReference>
<dbReference type="PANTHER" id="PTHR34984:SF1">
    <property type="entry name" value="CARBON STORAGE REGULATOR"/>
    <property type="match status" value="1"/>
</dbReference>
<dbReference type="Pfam" id="PF02599">
    <property type="entry name" value="CsrA"/>
    <property type="match status" value="1"/>
</dbReference>
<dbReference type="SUPFAM" id="SSF117130">
    <property type="entry name" value="CsrA-like"/>
    <property type="match status" value="1"/>
</dbReference>
<keyword id="KW-0010">Activator</keyword>
<keyword id="KW-0963">Cytoplasm</keyword>
<keyword id="KW-0678">Repressor</keyword>
<keyword id="KW-0694">RNA-binding</keyword>
<keyword id="KW-0810">Translation regulation</keyword>
<gene>
    <name evidence="1" type="primary">csrA</name>
    <name type="ordered locus">A1S_1141</name>
</gene>
<name>CSRA_ACIBT</name>
<sequence>MLILTRRVGETLMIGDQVSVTVLGVKGNQVRIGVNAPKEVSVHREEIYQRIQHERAMHEHLQHLDQDYQVSYEDDNYAQKNFNR</sequence>